<keyword id="KW-0028">Amino-acid biosynthesis</keyword>
<keyword id="KW-0963">Cytoplasm</keyword>
<keyword id="KW-0368">Histidine biosynthesis</keyword>
<keyword id="KW-0378">Hydrolase</keyword>
<keyword id="KW-0460">Magnesium</keyword>
<keyword id="KW-0479">Metal-binding</keyword>
<keyword id="KW-0862">Zinc</keyword>
<evidence type="ECO:0000255" key="1">
    <source>
        <dbReference type="HAMAP-Rule" id="MF_01021"/>
    </source>
</evidence>
<feature type="chain" id="PRO_1000149073" description="Phosphoribosyl-AMP cyclohydrolase">
    <location>
        <begin position="1"/>
        <end position="105"/>
    </location>
</feature>
<feature type="binding site" evidence="1">
    <location>
        <position position="72"/>
    </location>
    <ligand>
        <name>Mg(2+)</name>
        <dbReference type="ChEBI" id="CHEBI:18420"/>
    </ligand>
</feature>
<feature type="binding site" evidence="1">
    <location>
        <position position="73"/>
    </location>
    <ligand>
        <name>Zn(2+)</name>
        <dbReference type="ChEBI" id="CHEBI:29105"/>
        <note>ligand shared between dimeric partners</note>
    </ligand>
</feature>
<feature type="binding site" evidence="1">
    <location>
        <position position="74"/>
    </location>
    <ligand>
        <name>Mg(2+)</name>
        <dbReference type="ChEBI" id="CHEBI:18420"/>
    </ligand>
</feature>
<feature type="binding site" evidence="1">
    <location>
        <position position="76"/>
    </location>
    <ligand>
        <name>Mg(2+)</name>
        <dbReference type="ChEBI" id="CHEBI:18420"/>
    </ligand>
</feature>
<feature type="binding site" evidence="1">
    <location>
        <position position="89"/>
    </location>
    <ligand>
        <name>Zn(2+)</name>
        <dbReference type="ChEBI" id="CHEBI:29105"/>
        <note>ligand shared between dimeric partners</note>
    </ligand>
</feature>
<feature type="binding site" evidence="1">
    <location>
        <position position="96"/>
    </location>
    <ligand>
        <name>Zn(2+)</name>
        <dbReference type="ChEBI" id="CHEBI:29105"/>
        <note>ligand shared between dimeric partners</note>
    </ligand>
</feature>
<proteinExistence type="inferred from homology"/>
<name>HIS3_LISMH</name>
<organism>
    <name type="scientific">Listeria monocytogenes serotype 4a (strain HCC23)</name>
    <dbReference type="NCBI Taxonomy" id="552536"/>
    <lineage>
        <taxon>Bacteria</taxon>
        <taxon>Bacillati</taxon>
        <taxon>Bacillota</taxon>
        <taxon>Bacilli</taxon>
        <taxon>Bacillales</taxon>
        <taxon>Listeriaceae</taxon>
        <taxon>Listeria</taxon>
    </lineage>
</organism>
<accession>B8DA63</accession>
<dbReference type="EC" id="3.5.4.19" evidence="1"/>
<dbReference type="EMBL" id="CP001175">
    <property type="protein sequence ID" value="ACK40408.1"/>
    <property type="molecule type" value="Genomic_DNA"/>
</dbReference>
<dbReference type="RefSeq" id="WP_012581851.1">
    <property type="nucleotide sequence ID" value="NC_011660.1"/>
</dbReference>
<dbReference type="SMR" id="B8DA63"/>
<dbReference type="KEGG" id="lmh:LMHCC_2069"/>
<dbReference type="HOGENOM" id="CLU_048577_5_3_9"/>
<dbReference type="UniPathway" id="UPA00031">
    <property type="reaction ID" value="UER00008"/>
</dbReference>
<dbReference type="GO" id="GO:0005737">
    <property type="term" value="C:cytoplasm"/>
    <property type="evidence" value="ECO:0007669"/>
    <property type="project" value="UniProtKB-SubCell"/>
</dbReference>
<dbReference type="GO" id="GO:0000287">
    <property type="term" value="F:magnesium ion binding"/>
    <property type="evidence" value="ECO:0007669"/>
    <property type="project" value="UniProtKB-UniRule"/>
</dbReference>
<dbReference type="GO" id="GO:0004635">
    <property type="term" value="F:phosphoribosyl-AMP cyclohydrolase activity"/>
    <property type="evidence" value="ECO:0007669"/>
    <property type="project" value="UniProtKB-UniRule"/>
</dbReference>
<dbReference type="GO" id="GO:0008270">
    <property type="term" value="F:zinc ion binding"/>
    <property type="evidence" value="ECO:0007669"/>
    <property type="project" value="UniProtKB-UniRule"/>
</dbReference>
<dbReference type="GO" id="GO:0000105">
    <property type="term" value="P:L-histidine biosynthetic process"/>
    <property type="evidence" value="ECO:0007669"/>
    <property type="project" value="UniProtKB-UniRule"/>
</dbReference>
<dbReference type="FunFam" id="3.10.20.810:FF:000001">
    <property type="entry name" value="Histidine biosynthesis bifunctional protein HisIE"/>
    <property type="match status" value="1"/>
</dbReference>
<dbReference type="Gene3D" id="3.10.20.810">
    <property type="entry name" value="Phosphoribosyl-AMP cyclohydrolase"/>
    <property type="match status" value="1"/>
</dbReference>
<dbReference type="HAMAP" id="MF_01021">
    <property type="entry name" value="HisI"/>
    <property type="match status" value="1"/>
</dbReference>
<dbReference type="InterPro" id="IPR026660">
    <property type="entry name" value="PRA-CH"/>
</dbReference>
<dbReference type="InterPro" id="IPR002496">
    <property type="entry name" value="PRib_AMP_CycHydrolase_dom"/>
</dbReference>
<dbReference type="InterPro" id="IPR038019">
    <property type="entry name" value="PRib_AMP_CycHydrolase_sf"/>
</dbReference>
<dbReference type="NCBIfam" id="NF000768">
    <property type="entry name" value="PRK00051.1"/>
    <property type="match status" value="1"/>
</dbReference>
<dbReference type="PANTHER" id="PTHR42945">
    <property type="entry name" value="HISTIDINE BIOSYNTHESIS BIFUNCTIONAL PROTEIN"/>
    <property type="match status" value="1"/>
</dbReference>
<dbReference type="PANTHER" id="PTHR42945:SF1">
    <property type="entry name" value="HISTIDINE BIOSYNTHESIS BIFUNCTIONAL PROTEIN HIS7"/>
    <property type="match status" value="1"/>
</dbReference>
<dbReference type="Pfam" id="PF01502">
    <property type="entry name" value="PRA-CH"/>
    <property type="match status" value="1"/>
</dbReference>
<dbReference type="SUPFAM" id="SSF141734">
    <property type="entry name" value="HisI-like"/>
    <property type="match status" value="1"/>
</dbReference>
<reference key="1">
    <citation type="journal article" date="2011" name="J. Bacteriol.">
        <title>Genome sequence of lineage III Listeria monocytogenes strain HCC23.</title>
        <authorList>
            <person name="Steele C.L."/>
            <person name="Donaldson J.R."/>
            <person name="Paul D."/>
            <person name="Banes M.M."/>
            <person name="Arick T."/>
            <person name="Bridges S.M."/>
            <person name="Lawrence M.L."/>
        </authorList>
    </citation>
    <scope>NUCLEOTIDE SEQUENCE [LARGE SCALE GENOMIC DNA]</scope>
    <source>
        <strain>HCC23</strain>
    </source>
</reference>
<sequence length="105" mass="12055">MISVDFSKGLVPTIILDDQNGDVLMLAYMNEESYHKTLETGYTWFFSRSRNELWNKGATSGHTQKVKQIWTDCDNDTLLIRVTQIGPACHTGKKSCFFNLIKEDF</sequence>
<comment type="function">
    <text evidence="1">Catalyzes the hydrolysis of the adenine ring of phosphoribosyl-AMP.</text>
</comment>
<comment type="catalytic activity">
    <reaction evidence="1">
        <text>1-(5-phospho-beta-D-ribosyl)-5'-AMP + H2O = 1-(5-phospho-beta-D-ribosyl)-5-[(5-phospho-beta-D-ribosylamino)methylideneamino]imidazole-4-carboxamide</text>
        <dbReference type="Rhea" id="RHEA:20049"/>
        <dbReference type="ChEBI" id="CHEBI:15377"/>
        <dbReference type="ChEBI" id="CHEBI:58435"/>
        <dbReference type="ChEBI" id="CHEBI:59457"/>
        <dbReference type="EC" id="3.5.4.19"/>
    </reaction>
</comment>
<comment type="cofactor">
    <cofactor evidence="1">
        <name>Mg(2+)</name>
        <dbReference type="ChEBI" id="CHEBI:18420"/>
    </cofactor>
    <text evidence="1">Binds 1 Mg(2+) ion per subunit.</text>
</comment>
<comment type="cofactor">
    <cofactor evidence="1">
        <name>Zn(2+)</name>
        <dbReference type="ChEBI" id="CHEBI:29105"/>
    </cofactor>
    <text evidence="1">Binds 1 zinc ion per subunit.</text>
</comment>
<comment type="pathway">
    <text evidence="1">Amino-acid biosynthesis; L-histidine biosynthesis; L-histidine from 5-phospho-alpha-D-ribose 1-diphosphate: step 3/9.</text>
</comment>
<comment type="subunit">
    <text evidence="1">Homodimer.</text>
</comment>
<comment type="subcellular location">
    <subcellularLocation>
        <location evidence="1">Cytoplasm</location>
    </subcellularLocation>
</comment>
<comment type="similarity">
    <text evidence="1">Belongs to the PRA-CH family.</text>
</comment>
<gene>
    <name evidence="1" type="primary">hisI</name>
    <name type="ordered locus">LMHCC_2069</name>
</gene>
<protein>
    <recommendedName>
        <fullName evidence="1">Phosphoribosyl-AMP cyclohydrolase</fullName>
        <shortName evidence="1">PRA-CH</shortName>
        <ecNumber evidence="1">3.5.4.19</ecNumber>
    </recommendedName>
</protein>